<keyword id="KW-0143">Chaperone</keyword>
<keyword id="KW-0496">Mitochondrion</keyword>
<keyword id="KW-1185">Reference proteome</keyword>
<keyword id="KW-0809">Transit peptide</keyword>
<dbReference type="EMBL" id="M61773">
    <property type="protein sequence ID" value="AAA34442.1"/>
    <property type="molecule type" value="Genomic_DNA"/>
</dbReference>
<dbReference type="EMBL" id="Z49455">
    <property type="protein sequence ID" value="CAA89475.1"/>
    <property type="molecule type" value="Genomic_DNA"/>
</dbReference>
<dbReference type="EMBL" id="BK006943">
    <property type="protein sequence ID" value="DAA08625.1"/>
    <property type="molecule type" value="Genomic_DNA"/>
</dbReference>
<dbReference type="PIR" id="S56963">
    <property type="entry name" value="S56963"/>
</dbReference>
<dbReference type="RefSeq" id="NP_012355.1">
    <property type="nucleotide sequence ID" value="NM_001181613.1"/>
</dbReference>
<dbReference type="SMR" id="P22135"/>
<dbReference type="BioGRID" id="33581">
    <property type="interactions" value="163"/>
</dbReference>
<dbReference type="DIP" id="DIP-3027N"/>
<dbReference type="FunCoup" id="P22135">
    <property type="interactions" value="788"/>
</dbReference>
<dbReference type="IntAct" id="P22135">
    <property type="interactions" value="19"/>
</dbReference>
<dbReference type="MINT" id="P22135"/>
<dbReference type="STRING" id="4932.YJL180C"/>
<dbReference type="iPTMnet" id="P22135"/>
<dbReference type="PaxDb" id="4932-YJL180C"/>
<dbReference type="PeptideAtlas" id="P22135"/>
<dbReference type="EnsemblFungi" id="YJL180C_mRNA">
    <property type="protein sequence ID" value="YJL180C"/>
    <property type="gene ID" value="YJL180C"/>
</dbReference>
<dbReference type="GeneID" id="853259"/>
<dbReference type="KEGG" id="sce:YJL180C"/>
<dbReference type="AGR" id="SGD:S000003716"/>
<dbReference type="SGD" id="S000003716">
    <property type="gene designation" value="ATP12"/>
</dbReference>
<dbReference type="VEuPathDB" id="FungiDB:YJL180C"/>
<dbReference type="eggNOG" id="KOG3015">
    <property type="taxonomic scope" value="Eukaryota"/>
</dbReference>
<dbReference type="GeneTree" id="ENSGT00390000009492"/>
<dbReference type="HOGENOM" id="CLU_047893_1_2_1"/>
<dbReference type="InParanoid" id="P22135"/>
<dbReference type="OMA" id="QGWVMGL"/>
<dbReference type="OrthoDB" id="5322896at2759"/>
<dbReference type="BioCyc" id="YEAST:G3O-31615-MONOMER"/>
<dbReference type="BioGRID-ORCS" id="853259">
    <property type="hits" value="0 hits in 10 CRISPR screens"/>
</dbReference>
<dbReference type="PRO" id="PR:P22135"/>
<dbReference type="Proteomes" id="UP000002311">
    <property type="component" value="Chromosome X"/>
</dbReference>
<dbReference type="RNAct" id="P22135">
    <property type="molecule type" value="protein"/>
</dbReference>
<dbReference type="GO" id="GO:0005758">
    <property type="term" value="C:mitochondrial intermembrane space"/>
    <property type="evidence" value="ECO:0007669"/>
    <property type="project" value="UniProtKB-SubCell"/>
</dbReference>
<dbReference type="GO" id="GO:0005759">
    <property type="term" value="C:mitochondrial matrix"/>
    <property type="evidence" value="ECO:0000314"/>
    <property type="project" value="FlyBase"/>
</dbReference>
<dbReference type="GO" id="GO:0005739">
    <property type="term" value="C:mitochondrion"/>
    <property type="evidence" value="ECO:0000314"/>
    <property type="project" value="SGD"/>
</dbReference>
<dbReference type="GO" id="GO:0019904">
    <property type="term" value="F:protein domain specific binding"/>
    <property type="evidence" value="ECO:0000353"/>
    <property type="project" value="SGD"/>
</dbReference>
<dbReference type="GO" id="GO:0033615">
    <property type="term" value="P:mitochondrial proton-transporting ATP synthase complex assembly"/>
    <property type="evidence" value="ECO:0000315"/>
    <property type="project" value="FlyBase"/>
</dbReference>
<dbReference type="Gene3D" id="1.10.3580.10">
    <property type="entry name" value="ATP12 ATPase"/>
    <property type="match status" value="1"/>
</dbReference>
<dbReference type="Gene3D" id="3.30.2180.10">
    <property type="entry name" value="ATP12-like"/>
    <property type="match status" value="1"/>
</dbReference>
<dbReference type="InterPro" id="IPR011419">
    <property type="entry name" value="ATP12_ATP_synth-F1-assembly"/>
</dbReference>
<dbReference type="InterPro" id="IPR042272">
    <property type="entry name" value="ATP12_ATP_synth-F1-assembly_N"/>
</dbReference>
<dbReference type="InterPro" id="IPR023335">
    <property type="entry name" value="ATP12_ortho_dom_sf"/>
</dbReference>
<dbReference type="PANTHER" id="PTHR21013:SF10">
    <property type="entry name" value="ATP SYNTHASE MITOCHONDRIAL F1 COMPLEX ASSEMBLY FACTOR 2"/>
    <property type="match status" value="1"/>
</dbReference>
<dbReference type="PANTHER" id="PTHR21013">
    <property type="entry name" value="ATP SYNTHASE MITOCHONDRIAL F1 COMPLEX ASSEMBLY FACTOR 2/ATP12 PROTEIN, MITOCHONDRIAL PRECURSOR"/>
    <property type="match status" value="1"/>
</dbReference>
<dbReference type="Pfam" id="PF07542">
    <property type="entry name" value="ATP12"/>
    <property type="match status" value="1"/>
</dbReference>
<dbReference type="SUPFAM" id="SSF160909">
    <property type="entry name" value="ATP12-like"/>
    <property type="match status" value="1"/>
</dbReference>
<gene>
    <name type="primary">ATP12</name>
    <name type="ordered locus">YJL180C</name>
    <name type="ORF">J0486</name>
</gene>
<proteinExistence type="evidence at protein level"/>
<reference key="1">
    <citation type="journal article" date="1991" name="J. Biol. Chem.">
        <title>Characterization of ATP12, a yeast nuclear gene required for the assembly of the mitochondrial F1-ATPase.</title>
        <authorList>
            <person name="Bowman S."/>
            <person name="Ackerman S.H."/>
            <person name="Griffiths D.E."/>
            <person name="Tzagoloff A."/>
        </authorList>
    </citation>
    <scope>NUCLEOTIDE SEQUENCE [GENOMIC DNA]</scope>
    <scope>FUNCTION</scope>
    <scope>SUBUNIT</scope>
    <scope>SUBCELLULAR LOCATION</scope>
</reference>
<reference key="2">
    <citation type="journal article" date="1996" name="EMBO J.">
        <title>Complete nucleotide sequence of Saccharomyces cerevisiae chromosome X.</title>
        <authorList>
            <person name="Galibert F."/>
            <person name="Alexandraki D."/>
            <person name="Baur A."/>
            <person name="Boles E."/>
            <person name="Chalwatzis N."/>
            <person name="Chuat J.-C."/>
            <person name="Coster F."/>
            <person name="Cziepluch C."/>
            <person name="de Haan M."/>
            <person name="Domdey H."/>
            <person name="Durand P."/>
            <person name="Entian K.-D."/>
            <person name="Gatius M."/>
            <person name="Goffeau A."/>
            <person name="Grivell L.A."/>
            <person name="Hennemann A."/>
            <person name="Herbert C.J."/>
            <person name="Heumann K."/>
            <person name="Hilger F."/>
            <person name="Hollenberg C.P."/>
            <person name="Huang M.-E."/>
            <person name="Jacq C."/>
            <person name="Jauniaux J.-C."/>
            <person name="Katsoulou C."/>
            <person name="Kirchrath L."/>
            <person name="Kleine K."/>
            <person name="Kordes E."/>
            <person name="Koetter P."/>
            <person name="Liebl S."/>
            <person name="Louis E.J."/>
            <person name="Manus V."/>
            <person name="Mewes H.-W."/>
            <person name="Miosga T."/>
            <person name="Obermaier B."/>
            <person name="Perea J."/>
            <person name="Pohl T.M."/>
            <person name="Portetelle D."/>
            <person name="Pujol A."/>
            <person name="Purnelle B."/>
            <person name="Ramezani Rad M."/>
            <person name="Rasmussen S.W."/>
            <person name="Rose M."/>
            <person name="Rossau R."/>
            <person name="Schaaff-Gerstenschlaeger I."/>
            <person name="Smits P.H.M."/>
            <person name="Scarcez T."/>
            <person name="Soriano N."/>
            <person name="To Van D."/>
            <person name="Tzermia M."/>
            <person name="Van Broekhoven A."/>
            <person name="Vandenbol M."/>
            <person name="Wedler H."/>
            <person name="von Wettstein D."/>
            <person name="Wambutt R."/>
            <person name="Zagulski M."/>
            <person name="Zollner A."/>
            <person name="Karpfinger-Hartl L."/>
        </authorList>
    </citation>
    <scope>NUCLEOTIDE SEQUENCE [LARGE SCALE GENOMIC DNA]</scope>
    <source>
        <strain>ATCC 204508 / S288c</strain>
    </source>
</reference>
<reference key="3">
    <citation type="journal article" date="2014" name="G3 (Bethesda)">
        <title>The reference genome sequence of Saccharomyces cerevisiae: Then and now.</title>
        <authorList>
            <person name="Engel S.R."/>
            <person name="Dietrich F.S."/>
            <person name="Fisk D.G."/>
            <person name="Binkley G."/>
            <person name="Balakrishnan R."/>
            <person name="Costanzo M.C."/>
            <person name="Dwight S.S."/>
            <person name="Hitz B.C."/>
            <person name="Karra K."/>
            <person name="Nash R.S."/>
            <person name="Weng S."/>
            <person name="Wong E.D."/>
            <person name="Lloyd P."/>
            <person name="Skrzypek M.S."/>
            <person name="Miyasato S.R."/>
            <person name="Simison M."/>
            <person name="Cherry J.M."/>
        </authorList>
    </citation>
    <scope>GENOME REANNOTATION</scope>
    <source>
        <strain>ATCC 204508 / S288c</strain>
    </source>
</reference>
<reference key="4">
    <citation type="journal article" date="2003" name="Nature">
        <title>Global analysis of protein expression in yeast.</title>
        <authorList>
            <person name="Ghaemmaghami S."/>
            <person name="Huh W.-K."/>
            <person name="Bower K."/>
            <person name="Howson R.W."/>
            <person name="Belle A."/>
            <person name="Dephoure N."/>
            <person name="O'Shea E.K."/>
            <person name="Weissman J.S."/>
        </authorList>
    </citation>
    <scope>LEVEL OF PROTEIN EXPRESSION [LARGE SCALE ANALYSIS]</scope>
</reference>
<reference key="5">
    <citation type="journal article" date="2006" name="J. Proteome Res.">
        <title>Toward the complete yeast mitochondrial proteome: multidimensional separation techniques for mitochondrial proteomics.</title>
        <authorList>
            <person name="Reinders J."/>
            <person name="Zahedi R.P."/>
            <person name="Pfanner N."/>
            <person name="Meisinger C."/>
            <person name="Sickmann A."/>
        </authorList>
    </citation>
    <scope>SUBCELLULAR LOCATION [LARGE SCALE ANALYSIS]</scope>
    <scope>IDENTIFICATION BY MASS SPECTROMETRY</scope>
</reference>
<reference key="6">
    <citation type="journal article" date="2012" name="Mol. Cell. Proteomics">
        <title>Intermembrane space proteome of yeast mitochondria.</title>
        <authorList>
            <person name="Voegtle F.N."/>
            <person name="Burkhart J.M."/>
            <person name="Rao S."/>
            <person name="Gerbeth C."/>
            <person name="Hinrichs J."/>
            <person name="Martinou J.C."/>
            <person name="Chacinska A."/>
            <person name="Sickmann A."/>
            <person name="Zahedi R.P."/>
            <person name="Meisinger C."/>
        </authorList>
    </citation>
    <scope>IDENTIFICATION BY MASS SPECTROMETRY</scope>
    <scope>SUBCELLULAR LOCATION [LARGE SCALE ANALYSIS]</scope>
</reference>
<sequence>MLPSLRKGCFIVNSIRLKLPRFYSLNAQPLGTDNTIENNTPTETNRLSKTSQKFWEKVSLNRDVEKGKIALQLDGRTIKTPLGNGIIVDNAKSLLAYLLKLEWSSLSSLSIKTHSLPLTSLVARCIDLQMTNEPGCDPQLVAKIGGNSDVIKNQLLRYLDTDTLLVFSPMNEFEGRLRNAQNELYIPIIKGMEEFLRNFSSESNIRLQILDADIHGLRGNQQSDIVKNAAKKYMSSLSPWDLAILEKTVLTTKSFICGVLLLENKKDTANLIPALKTDMDNIVRAATLETIFQVEKWGEVEDTHDVDKRDIRRKIHTAAIAAFKQ</sequence>
<name>ATP12_YEAST</name>
<accession>P22135</accession>
<accession>D6VW09</accession>
<organism>
    <name type="scientific">Saccharomyces cerevisiae (strain ATCC 204508 / S288c)</name>
    <name type="common">Baker's yeast</name>
    <dbReference type="NCBI Taxonomy" id="559292"/>
    <lineage>
        <taxon>Eukaryota</taxon>
        <taxon>Fungi</taxon>
        <taxon>Dikarya</taxon>
        <taxon>Ascomycota</taxon>
        <taxon>Saccharomycotina</taxon>
        <taxon>Saccharomycetes</taxon>
        <taxon>Saccharomycetales</taxon>
        <taxon>Saccharomycetaceae</taxon>
        <taxon>Saccharomyces</taxon>
    </lineage>
</organism>
<comment type="function">
    <text evidence="4">Essential for the assembly of the mitochondrial F1-F0 complex.</text>
</comment>
<comment type="subunit">
    <text evidence="4">Exists either as a homo- or heterooligomer.</text>
</comment>
<comment type="interaction">
    <interactant intactId="EBI-3312">
        <id>P22135</id>
    </interactant>
    <interactant intactId="EBI-25141">
        <id>P40491</id>
        <label>FMC1</label>
    </interactant>
    <organismsDiffer>false</organismsDiffer>
    <experiments>2</experiments>
</comment>
<comment type="subcellular location">
    <subcellularLocation>
        <location evidence="3 4">Mitochondrion</location>
    </subcellularLocation>
    <subcellularLocation>
        <location evidence="5">Mitochondrion intermembrane space</location>
    </subcellularLocation>
    <text>Mitochondrial, either as a constituent of the matrix, or in tenous association with the internal side of the inner membrane.</text>
</comment>
<comment type="miscellaneous">
    <text evidence="2">Present with 6370 molecules/cell in log phase SD medium.</text>
</comment>
<comment type="similarity">
    <text evidence="6">Belongs to the ATP12 family.</text>
</comment>
<feature type="transit peptide" description="Mitochondrion" evidence="1">
    <location>
        <begin position="1"/>
        <end position="32" status="uncertain"/>
    </location>
</feature>
<feature type="chain" id="PRO_0000002421" description="Protein ATP12, mitochondrial">
    <location>
        <begin position="33" status="uncertain"/>
        <end position="325"/>
    </location>
</feature>
<feature type="sequence conflict" description="In Ref. 1; AAA34442." evidence="6" ref="1">
    <original>S</original>
    <variation>N</variation>
    <location>
        <position position="48"/>
    </location>
</feature>
<protein>
    <recommendedName>
        <fullName>Protein ATP12, mitochondrial</fullName>
    </recommendedName>
</protein>
<evidence type="ECO:0000255" key="1"/>
<evidence type="ECO:0000269" key="2">
    <source>
    </source>
</evidence>
<evidence type="ECO:0000269" key="3">
    <source>
    </source>
</evidence>
<evidence type="ECO:0000269" key="4">
    <source>
    </source>
</evidence>
<evidence type="ECO:0000269" key="5">
    <source>
    </source>
</evidence>
<evidence type="ECO:0000305" key="6"/>